<reference key="1">
    <citation type="journal article" date="2005" name="Science">
        <title>The genome of the basidiomycetous yeast and human pathogen Cryptococcus neoformans.</title>
        <authorList>
            <person name="Loftus B.J."/>
            <person name="Fung E."/>
            <person name="Roncaglia P."/>
            <person name="Rowley D."/>
            <person name="Amedeo P."/>
            <person name="Bruno D."/>
            <person name="Vamathevan J."/>
            <person name="Miranda M."/>
            <person name="Anderson I.J."/>
            <person name="Fraser J.A."/>
            <person name="Allen J.E."/>
            <person name="Bosdet I.E."/>
            <person name="Brent M.R."/>
            <person name="Chiu R."/>
            <person name="Doering T.L."/>
            <person name="Donlin M.J."/>
            <person name="D'Souza C.A."/>
            <person name="Fox D.S."/>
            <person name="Grinberg V."/>
            <person name="Fu J."/>
            <person name="Fukushima M."/>
            <person name="Haas B.J."/>
            <person name="Huang J.C."/>
            <person name="Janbon G."/>
            <person name="Jones S.J.M."/>
            <person name="Koo H.L."/>
            <person name="Krzywinski M.I."/>
            <person name="Kwon-Chung K.J."/>
            <person name="Lengeler K.B."/>
            <person name="Maiti R."/>
            <person name="Marra M.A."/>
            <person name="Marra R.E."/>
            <person name="Mathewson C.A."/>
            <person name="Mitchell T.G."/>
            <person name="Pertea M."/>
            <person name="Riggs F.R."/>
            <person name="Salzberg S.L."/>
            <person name="Schein J.E."/>
            <person name="Shvartsbeyn A."/>
            <person name="Shin H."/>
            <person name="Shumway M."/>
            <person name="Specht C.A."/>
            <person name="Suh B.B."/>
            <person name="Tenney A."/>
            <person name="Utterback T.R."/>
            <person name="Wickes B.L."/>
            <person name="Wortman J.R."/>
            <person name="Wye N.H."/>
            <person name="Kronstad J.W."/>
            <person name="Lodge J.K."/>
            <person name="Heitman J."/>
            <person name="Davis R.W."/>
            <person name="Fraser C.M."/>
            <person name="Hyman R.W."/>
        </authorList>
    </citation>
    <scope>NUCLEOTIDE SEQUENCE [LARGE SCALE GENOMIC DNA]</scope>
    <source>
        <strain>JEC21 / ATCC MYA-565</strain>
    </source>
</reference>
<protein>
    <recommendedName>
        <fullName evidence="2">Transcription and mRNA export factor SUS1</fullName>
    </recommendedName>
</protein>
<proteinExistence type="inferred from homology"/>
<accession>P0CS72</accession>
<accession>Q55UI0</accession>
<accession>Q5KHW5</accession>
<feature type="chain" id="PRO_0000367567" description="Transcription and mRNA export factor SUS1">
    <location>
        <begin position="1"/>
        <end position="100"/>
    </location>
</feature>
<organism>
    <name type="scientific">Cryptococcus neoformans var. neoformans serotype D (strain JEC21 / ATCC MYA-565)</name>
    <name type="common">Filobasidiella neoformans</name>
    <dbReference type="NCBI Taxonomy" id="214684"/>
    <lineage>
        <taxon>Eukaryota</taxon>
        <taxon>Fungi</taxon>
        <taxon>Dikarya</taxon>
        <taxon>Basidiomycota</taxon>
        <taxon>Agaricomycotina</taxon>
        <taxon>Tremellomycetes</taxon>
        <taxon>Tremellales</taxon>
        <taxon>Cryptococcaceae</taxon>
        <taxon>Cryptococcus</taxon>
        <taxon>Cryptococcus neoformans species complex</taxon>
    </lineage>
</organism>
<comment type="function">
    <text evidence="1">Involved in mRNA export coupled transcription activation by association with both the TREX-2 and the SAGA complexes. At the promoters, SAGA is required for recruitment of the basal transcription machinery. It influences RNA polymerase II transcriptional activity through different activities such as TBP interaction and promoter selectivity, interaction with transcription activators, and chromatin modification through histone acetylation and deubiquitination. Within the SAGA complex, participates in a subcomplex required for deubiquitination of H2B and for the maintenance of steady-state H3 methylation levels. The TREX-2 complex functions in docking export-competent ribonucleoprotein particles (mRNPs) to the nuclear entrance of the nuclear pore complex (nuclear basket). TREX-2 participates in mRNA export and accurate chromatin positioning in the nucleus by tethering genes to the nuclear periphery. May also be involved in cytoplasmic mRNA decay by interaction with components of P-bodies (By similarity).</text>
</comment>
<comment type="subunit">
    <text evidence="2">Component of the nuclear pore complex (NPC)-associated TREX-2 complex (transcription and export complex 2), composed of at least SUS1, SAC3, THP1, SEM1, and CDC31. TREX-2 contains 2 SUS1 chains. The TREX-2 complex interacts with the nucleoporin NUP1. Component of the 1.8 MDa SAGA transcription coactivator-HAT complex. SAGA is built of 5 distinct domains with specialized functions. Within the SAGA complex, SUS1, SGF11, SGF73 and UBP8 form an additional subcomplex of SAGA called the DUB module (deubiquitination module). Interacts directly with THP1, SAC3, SGF11, and with the RNA polymerase II.</text>
</comment>
<comment type="subcellular location">
    <subcellularLocation>
        <location evidence="2">Nucleus</location>
        <location evidence="2">Nucleoplasm</location>
    </subcellularLocation>
    <subcellularLocation>
        <location evidence="2">Cytoplasm</location>
        <location evidence="2">P-body</location>
    </subcellularLocation>
</comment>
<comment type="similarity">
    <text evidence="2">Belongs to the ENY2 family.</text>
</comment>
<keyword id="KW-0010">Activator</keyword>
<keyword id="KW-0156">Chromatin regulator</keyword>
<keyword id="KW-0963">Cytoplasm</keyword>
<keyword id="KW-0509">mRNA transport</keyword>
<keyword id="KW-0539">Nucleus</keyword>
<keyword id="KW-0653">Protein transport</keyword>
<keyword id="KW-1185">Reference proteome</keyword>
<keyword id="KW-0804">Transcription</keyword>
<keyword id="KW-0805">Transcription regulation</keyword>
<keyword id="KW-0811">Translocation</keyword>
<keyword id="KW-0813">Transport</keyword>
<dbReference type="EMBL" id="AE017344">
    <property type="protein sequence ID" value="AAW42756.1"/>
    <property type="molecule type" value="Genomic_DNA"/>
</dbReference>
<dbReference type="RefSeq" id="XP_570063.1">
    <property type="nucleotide sequence ID" value="XM_570063.1"/>
</dbReference>
<dbReference type="SMR" id="P0CS72"/>
<dbReference type="FunCoup" id="P0CS72">
    <property type="interactions" value="21"/>
</dbReference>
<dbReference type="STRING" id="214684.P0CS72"/>
<dbReference type="PaxDb" id="214684-P0CS72"/>
<dbReference type="EnsemblFungi" id="AAW42756">
    <property type="protein sequence ID" value="AAW42756"/>
    <property type="gene ID" value="CND05070"/>
</dbReference>
<dbReference type="GeneID" id="3256896"/>
<dbReference type="KEGG" id="cne:CND05070"/>
<dbReference type="VEuPathDB" id="FungiDB:CND05070"/>
<dbReference type="eggNOG" id="ENOG502SDC3">
    <property type="taxonomic scope" value="Eukaryota"/>
</dbReference>
<dbReference type="HOGENOM" id="CLU_134052_2_0_1"/>
<dbReference type="InParanoid" id="P0CS72"/>
<dbReference type="OMA" id="MIENGDW"/>
<dbReference type="OrthoDB" id="6221744at2759"/>
<dbReference type="Proteomes" id="UP000002149">
    <property type="component" value="Chromosome 4"/>
</dbReference>
<dbReference type="GO" id="GO:0071819">
    <property type="term" value="C:DUBm complex"/>
    <property type="evidence" value="ECO:0000318"/>
    <property type="project" value="GO_Central"/>
</dbReference>
<dbReference type="GO" id="GO:0005643">
    <property type="term" value="C:nuclear pore"/>
    <property type="evidence" value="ECO:0007669"/>
    <property type="project" value="UniProtKB-UniRule"/>
</dbReference>
<dbReference type="GO" id="GO:0005654">
    <property type="term" value="C:nucleoplasm"/>
    <property type="evidence" value="ECO:0007669"/>
    <property type="project" value="UniProtKB-SubCell"/>
</dbReference>
<dbReference type="GO" id="GO:0000932">
    <property type="term" value="C:P-body"/>
    <property type="evidence" value="ECO:0007669"/>
    <property type="project" value="UniProtKB-SubCell"/>
</dbReference>
<dbReference type="GO" id="GO:0000124">
    <property type="term" value="C:SAGA complex"/>
    <property type="evidence" value="ECO:0000318"/>
    <property type="project" value="GO_Central"/>
</dbReference>
<dbReference type="GO" id="GO:0070390">
    <property type="term" value="C:transcription export complex 2"/>
    <property type="evidence" value="ECO:0007669"/>
    <property type="project" value="UniProtKB-UniRule"/>
</dbReference>
<dbReference type="GO" id="GO:0003682">
    <property type="term" value="F:chromatin binding"/>
    <property type="evidence" value="ECO:0000318"/>
    <property type="project" value="GO_Central"/>
</dbReference>
<dbReference type="GO" id="GO:0003713">
    <property type="term" value="F:transcription coactivator activity"/>
    <property type="evidence" value="ECO:0000318"/>
    <property type="project" value="GO_Central"/>
</dbReference>
<dbReference type="GO" id="GO:0006325">
    <property type="term" value="P:chromatin organization"/>
    <property type="evidence" value="ECO:0007669"/>
    <property type="project" value="UniProtKB-KW"/>
</dbReference>
<dbReference type="GO" id="GO:0016973">
    <property type="term" value="P:poly(A)+ mRNA export from nucleus"/>
    <property type="evidence" value="ECO:0000318"/>
    <property type="project" value="GO_Central"/>
</dbReference>
<dbReference type="GO" id="GO:0015031">
    <property type="term" value="P:protein transport"/>
    <property type="evidence" value="ECO:0007669"/>
    <property type="project" value="UniProtKB-KW"/>
</dbReference>
<dbReference type="GO" id="GO:0006357">
    <property type="term" value="P:regulation of transcription by RNA polymerase II"/>
    <property type="evidence" value="ECO:0000318"/>
    <property type="project" value="GO_Central"/>
</dbReference>
<dbReference type="GO" id="GO:0006368">
    <property type="term" value="P:transcription elongation by RNA polymerase II"/>
    <property type="evidence" value="ECO:0007669"/>
    <property type="project" value="UniProtKB-UniRule"/>
</dbReference>
<dbReference type="FunFam" id="1.10.246.140:FF:000003">
    <property type="entry name" value="Transcription and mRNA export factor SUS1"/>
    <property type="match status" value="1"/>
</dbReference>
<dbReference type="Gene3D" id="1.10.246.140">
    <property type="match status" value="1"/>
</dbReference>
<dbReference type="HAMAP" id="MF_03046">
    <property type="entry name" value="ENY2_Sus1"/>
    <property type="match status" value="1"/>
</dbReference>
<dbReference type="InterPro" id="IPR018783">
    <property type="entry name" value="TF_ENY2"/>
</dbReference>
<dbReference type="InterPro" id="IPR038212">
    <property type="entry name" value="TF_EnY2_sf"/>
</dbReference>
<dbReference type="PANTHER" id="PTHR12514">
    <property type="entry name" value="ENHANCER OF YELLOW 2 TRANSCRIPTION FACTOR"/>
    <property type="match status" value="1"/>
</dbReference>
<dbReference type="Pfam" id="PF10163">
    <property type="entry name" value="EnY2"/>
    <property type="match status" value="1"/>
</dbReference>
<name>SUS1_CRYNJ</name>
<gene>
    <name evidence="2" type="primary">SUS1</name>
    <name type="ordered locus">CND05070</name>
</gene>
<sequence length="100" mass="11357">MSHVDVTVDEATINAIRQRMLETGDWERIQKLLRAHLEESGWVDDLKDLAKEKARAQDVPNLENLVKQISESAAGMVSDNVKRDVMLEIESVLDREVDQA</sequence>
<evidence type="ECO:0000250" key="1"/>
<evidence type="ECO:0000255" key="2">
    <source>
        <dbReference type="HAMAP-Rule" id="MF_03046"/>
    </source>
</evidence>